<protein>
    <recommendedName>
        <fullName>PIH1 domain-containing protein 2</fullName>
    </recommendedName>
</protein>
<accession>Q5XGG3</accession>
<accession>Q28J33</accession>
<organism>
    <name type="scientific">Xenopus tropicalis</name>
    <name type="common">Western clawed frog</name>
    <name type="synonym">Silurana tropicalis</name>
    <dbReference type="NCBI Taxonomy" id="8364"/>
    <lineage>
        <taxon>Eukaryota</taxon>
        <taxon>Metazoa</taxon>
        <taxon>Chordata</taxon>
        <taxon>Craniata</taxon>
        <taxon>Vertebrata</taxon>
        <taxon>Euteleostomi</taxon>
        <taxon>Amphibia</taxon>
        <taxon>Batrachia</taxon>
        <taxon>Anura</taxon>
        <taxon>Pipoidea</taxon>
        <taxon>Pipidae</taxon>
        <taxon>Xenopodinae</taxon>
        <taxon>Xenopus</taxon>
        <taxon>Silurana</taxon>
    </lineage>
</organism>
<gene>
    <name type="primary">pih1d2</name>
    <name type="ORF">TNeu089n07.1</name>
</gene>
<evidence type="ECO:0000305" key="1"/>
<sequence length="321" mass="36322">MESSFTQKDMLAQVNQLWSMLDDMAENSPESYQKFIQRHMKEGKEFMTPPEPNLCIHTKILEPDEKILFINICQWNRVPAPMSEAHPVPISAGQLENLSDGTVVAIAYNPEVLKRAHQDHVELDQLIRLAMKYIEEQYQITLCHSYHVAPFQLKGNAKMMKESLERIQKQPATNKGNSSCATDNSLLEELKSIALIREKQETSPSICITREDAPKSTKTKLIEEISSTDLQNRDLLPSPWHELSVTKDNAGHPQSLILKVKLRGVHSVAECDLSVSKDDLLLVVPGRYRLLLNLPQAVNEETVAAKFNKANYILLVTMPTL</sequence>
<name>PIHD2_XENTR</name>
<dbReference type="EMBL" id="CR760082">
    <property type="protein sequence ID" value="CAJ82634.1"/>
    <property type="molecule type" value="mRNA"/>
</dbReference>
<dbReference type="EMBL" id="BC084477">
    <property type="protein sequence ID" value="AAH84477.1"/>
    <property type="molecule type" value="mRNA"/>
</dbReference>
<dbReference type="RefSeq" id="NP_001011085.1">
    <property type="nucleotide sequence ID" value="NM_001011085.1"/>
</dbReference>
<dbReference type="RefSeq" id="XP_017950851.1">
    <property type="nucleotide sequence ID" value="XM_018095362.1"/>
</dbReference>
<dbReference type="SMR" id="Q5XGG3"/>
<dbReference type="FunCoup" id="Q5XGG3">
    <property type="interactions" value="50"/>
</dbReference>
<dbReference type="STRING" id="8364.ENSXETP00000035865"/>
<dbReference type="PaxDb" id="8364-ENSXETP00000022477"/>
<dbReference type="DNASU" id="496498"/>
<dbReference type="GeneID" id="496498"/>
<dbReference type="KEGG" id="xtr:496498"/>
<dbReference type="AGR" id="Xenbase:XB-GENE-5749918"/>
<dbReference type="CTD" id="120379"/>
<dbReference type="Xenbase" id="XB-GENE-5749918">
    <property type="gene designation" value="pih1d2"/>
</dbReference>
<dbReference type="eggNOG" id="KOG4356">
    <property type="taxonomic scope" value="Eukaryota"/>
</dbReference>
<dbReference type="InParanoid" id="Q5XGG3"/>
<dbReference type="OMA" id="SCLCTEI"/>
<dbReference type="OrthoDB" id="545063at2759"/>
<dbReference type="Proteomes" id="UP000008143">
    <property type="component" value="Chromosome 7"/>
</dbReference>
<dbReference type="InterPro" id="IPR050734">
    <property type="entry name" value="PIH1/Kintoun_subfamily"/>
</dbReference>
<dbReference type="InterPro" id="IPR012981">
    <property type="entry name" value="PIH1_N"/>
</dbReference>
<dbReference type="InterPro" id="IPR041442">
    <property type="entry name" value="PIH1D1/2/3_CS-like"/>
</dbReference>
<dbReference type="PANTHER" id="PTHR22997">
    <property type="entry name" value="PIH1 DOMAIN-CONTAINING PROTEIN 1"/>
    <property type="match status" value="1"/>
</dbReference>
<dbReference type="PANTHER" id="PTHR22997:SF6">
    <property type="entry name" value="PIH1 DOMAIN-CONTAINING PROTEIN 2"/>
    <property type="match status" value="1"/>
</dbReference>
<dbReference type="Pfam" id="PF08190">
    <property type="entry name" value="PIH1"/>
    <property type="match status" value="1"/>
</dbReference>
<dbReference type="Pfam" id="PF18201">
    <property type="entry name" value="PIH1_CS"/>
    <property type="match status" value="1"/>
</dbReference>
<keyword id="KW-1185">Reference proteome</keyword>
<proteinExistence type="evidence at transcript level"/>
<comment type="similarity">
    <text evidence="1">Belongs to the PIH1 family.</text>
</comment>
<reference key="1">
    <citation type="submission" date="2006-10" db="EMBL/GenBank/DDBJ databases">
        <authorList>
            <consortium name="Sanger Xenopus tropicalis EST/cDNA project"/>
        </authorList>
    </citation>
    <scope>NUCLEOTIDE SEQUENCE [LARGE SCALE MRNA]</scope>
    <source>
        <tissue>Neurula</tissue>
    </source>
</reference>
<reference key="2">
    <citation type="submission" date="2004-10" db="EMBL/GenBank/DDBJ databases">
        <authorList>
            <consortium name="NIH - Xenopus Gene Collection (XGC) project"/>
        </authorList>
    </citation>
    <scope>NUCLEOTIDE SEQUENCE [LARGE SCALE MRNA]</scope>
    <source>
        <tissue>Embryo</tissue>
    </source>
</reference>
<feature type="chain" id="PRO_0000307337" description="PIH1 domain-containing protein 2">
    <location>
        <begin position="1"/>
        <end position="321"/>
    </location>
</feature>
<feature type="sequence conflict" description="In Ref. 1; CAJ82634." evidence="1" ref="1">
    <original>A</original>
    <variation>V</variation>
    <location>
        <position position="213"/>
    </location>
</feature>
<feature type="sequence conflict" description="In Ref. 1; CAJ82634." evidence="1" ref="1">
    <original>T</original>
    <variation>I</variation>
    <location>
        <position position="219"/>
    </location>
</feature>